<name>CLPP_YERPE</name>
<keyword id="KW-0963">Cytoplasm</keyword>
<keyword id="KW-0378">Hydrolase</keyword>
<keyword id="KW-0645">Protease</keyword>
<keyword id="KW-1185">Reference proteome</keyword>
<keyword id="KW-0720">Serine protease</keyword>
<gene>
    <name evidence="1" type="primary">clpP</name>
    <name type="ordered locus">YPO3157</name>
    <name type="ordered locus">y1027</name>
    <name type="ordered locus">YP_0774</name>
</gene>
<evidence type="ECO:0000255" key="1">
    <source>
        <dbReference type="HAMAP-Rule" id="MF_00444"/>
    </source>
</evidence>
<protein>
    <recommendedName>
        <fullName evidence="1">ATP-dependent Clp protease proteolytic subunit</fullName>
        <ecNumber evidence="1">3.4.21.92</ecNumber>
    </recommendedName>
    <alternativeName>
        <fullName evidence="1">Endopeptidase Clp</fullName>
    </alternativeName>
</protein>
<proteinExistence type="inferred from homology"/>
<organism>
    <name type="scientific">Yersinia pestis</name>
    <dbReference type="NCBI Taxonomy" id="632"/>
    <lineage>
        <taxon>Bacteria</taxon>
        <taxon>Pseudomonadati</taxon>
        <taxon>Pseudomonadota</taxon>
        <taxon>Gammaproteobacteria</taxon>
        <taxon>Enterobacterales</taxon>
        <taxon>Yersiniaceae</taxon>
        <taxon>Yersinia</taxon>
    </lineage>
</organism>
<accession>Q8ZC65</accession>
<accession>Q0WCC6</accession>
<sequence length="207" mass="23320">MSYSGERDQFAPNMALVPMVVEQTSRGERSYDIFSRLLKERIIFLTGQVEDHMANLITAQMLFLEAENPEKDIFLYINSPGGVITAGMSIYDTMQFIKPDVSTICMGQACSMGAFLLTAGAKGKRFCLPNSRVMIHQPLGGFQGQATDIEIHAKEILKVKSRMNELMAYHTGKSLEEIERDTERDRFLSAEQSVEYGLVDSVFTRRD</sequence>
<dbReference type="EC" id="3.4.21.92" evidence="1"/>
<dbReference type="EMBL" id="AL590842">
    <property type="protein sequence ID" value="CAL21752.1"/>
    <property type="molecule type" value="Genomic_DNA"/>
</dbReference>
<dbReference type="EMBL" id="AE009952">
    <property type="protein sequence ID" value="AAM84608.1"/>
    <property type="molecule type" value="Genomic_DNA"/>
</dbReference>
<dbReference type="EMBL" id="AE017042">
    <property type="protein sequence ID" value="AAS61039.1"/>
    <property type="molecule type" value="Genomic_DNA"/>
</dbReference>
<dbReference type="PIR" id="AE0383">
    <property type="entry name" value="AE0383"/>
</dbReference>
<dbReference type="RefSeq" id="WP_002208642.1">
    <property type="nucleotide sequence ID" value="NZ_WUCM01000043.1"/>
</dbReference>
<dbReference type="RefSeq" id="YP_002348062.1">
    <property type="nucleotide sequence ID" value="NC_003143.1"/>
</dbReference>
<dbReference type="SMR" id="Q8ZC65"/>
<dbReference type="STRING" id="214092.YPO3157"/>
<dbReference type="MEROPS" id="S14.001"/>
<dbReference type="PaxDb" id="214092-YPO3157"/>
<dbReference type="DNASU" id="1145974"/>
<dbReference type="EnsemblBacteria" id="AAS61039">
    <property type="protein sequence ID" value="AAS61039"/>
    <property type="gene ID" value="YP_0774"/>
</dbReference>
<dbReference type="GeneID" id="96664465"/>
<dbReference type="KEGG" id="ype:YPO3157"/>
<dbReference type="KEGG" id="ypk:y1027"/>
<dbReference type="KEGG" id="ypm:YP_0774"/>
<dbReference type="PATRIC" id="fig|214092.21.peg.3614"/>
<dbReference type="eggNOG" id="COG0740">
    <property type="taxonomic scope" value="Bacteria"/>
</dbReference>
<dbReference type="HOGENOM" id="CLU_058707_3_2_6"/>
<dbReference type="OMA" id="RDYWMKA"/>
<dbReference type="OrthoDB" id="9802800at2"/>
<dbReference type="Proteomes" id="UP000000815">
    <property type="component" value="Chromosome"/>
</dbReference>
<dbReference type="Proteomes" id="UP000001019">
    <property type="component" value="Chromosome"/>
</dbReference>
<dbReference type="Proteomes" id="UP000002490">
    <property type="component" value="Chromosome"/>
</dbReference>
<dbReference type="GO" id="GO:0005737">
    <property type="term" value="C:cytoplasm"/>
    <property type="evidence" value="ECO:0007669"/>
    <property type="project" value="UniProtKB-SubCell"/>
</dbReference>
<dbReference type="GO" id="GO:0009368">
    <property type="term" value="C:endopeptidase Clp complex"/>
    <property type="evidence" value="ECO:0000318"/>
    <property type="project" value="GO_Central"/>
</dbReference>
<dbReference type="GO" id="GO:0004176">
    <property type="term" value="F:ATP-dependent peptidase activity"/>
    <property type="evidence" value="ECO:0000318"/>
    <property type="project" value="GO_Central"/>
</dbReference>
<dbReference type="GO" id="GO:0051117">
    <property type="term" value="F:ATPase binding"/>
    <property type="evidence" value="ECO:0000318"/>
    <property type="project" value="GO_Central"/>
</dbReference>
<dbReference type="GO" id="GO:0004252">
    <property type="term" value="F:serine-type endopeptidase activity"/>
    <property type="evidence" value="ECO:0000318"/>
    <property type="project" value="GO_Central"/>
</dbReference>
<dbReference type="GO" id="GO:0006515">
    <property type="term" value="P:protein quality control for misfolded or incompletely synthesized proteins"/>
    <property type="evidence" value="ECO:0000318"/>
    <property type="project" value="GO_Central"/>
</dbReference>
<dbReference type="CDD" id="cd07017">
    <property type="entry name" value="S14_ClpP_2"/>
    <property type="match status" value="1"/>
</dbReference>
<dbReference type="FunFam" id="3.90.226.10:FF:000001">
    <property type="entry name" value="ATP-dependent Clp protease proteolytic subunit"/>
    <property type="match status" value="1"/>
</dbReference>
<dbReference type="Gene3D" id="3.90.226.10">
    <property type="entry name" value="2-enoyl-CoA Hydratase, Chain A, domain 1"/>
    <property type="match status" value="1"/>
</dbReference>
<dbReference type="HAMAP" id="MF_00444">
    <property type="entry name" value="ClpP"/>
    <property type="match status" value="1"/>
</dbReference>
<dbReference type="InterPro" id="IPR001907">
    <property type="entry name" value="ClpP"/>
</dbReference>
<dbReference type="InterPro" id="IPR029045">
    <property type="entry name" value="ClpP/crotonase-like_dom_sf"/>
</dbReference>
<dbReference type="InterPro" id="IPR023562">
    <property type="entry name" value="ClpP/TepA"/>
</dbReference>
<dbReference type="InterPro" id="IPR033135">
    <property type="entry name" value="ClpP_His_AS"/>
</dbReference>
<dbReference type="InterPro" id="IPR018215">
    <property type="entry name" value="ClpP_Ser_AS"/>
</dbReference>
<dbReference type="NCBIfam" id="TIGR00493">
    <property type="entry name" value="clpP"/>
    <property type="match status" value="1"/>
</dbReference>
<dbReference type="NCBIfam" id="NF001368">
    <property type="entry name" value="PRK00277.1"/>
    <property type="match status" value="1"/>
</dbReference>
<dbReference type="NCBIfam" id="NF009205">
    <property type="entry name" value="PRK12553.1"/>
    <property type="match status" value="1"/>
</dbReference>
<dbReference type="PANTHER" id="PTHR10381">
    <property type="entry name" value="ATP-DEPENDENT CLP PROTEASE PROTEOLYTIC SUBUNIT"/>
    <property type="match status" value="1"/>
</dbReference>
<dbReference type="PANTHER" id="PTHR10381:SF70">
    <property type="entry name" value="ATP-DEPENDENT CLP PROTEASE PROTEOLYTIC SUBUNIT"/>
    <property type="match status" value="1"/>
</dbReference>
<dbReference type="Pfam" id="PF00574">
    <property type="entry name" value="CLP_protease"/>
    <property type="match status" value="1"/>
</dbReference>
<dbReference type="PRINTS" id="PR00127">
    <property type="entry name" value="CLPPROTEASEP"/>
</dbReference>
<dbReference type="SUPFAM" id="SSF52096">
    <property type="entry name" value="ClpP/crotonase"/>
    <property type="match status" value="1"/>
</dbReference>
<dbReference type="PROSITE" id="PS00382">
    <property type="entry name" value="CLP_PROTEASE_HIS"/>
    <property type="match status" value="1"/>
</dbReference>
<dbReference type="PROSITE" id="PS00381">
    <property type="entry name" value="CLP_PROTEASE_SER"/>
    <property type="match status" value="1"/>
</dbReference>
<reference key="1">
    <citation type="journal article" date="2001" name="Nature">
        <title>Genome sequence of Yersinia pestis, the causative agent of plague.</title>
        <authorList>
            <person name="Parkhill J."/>
            <person name="Wren B.W."/>
            <person name="Thomson N.R."/>
            <person name="Titball R.W."/>
            <person name="Holden M.T.G."/>
            <person name="Prentice M.B."/>
            <person name="Sebaihia M."/>
            <person name="James K.D."/>
            <person name="Churcher C.M."/>
            <person name="Mungall K.L."/>
            <person name="Baker S."/>
            <person name="Basham D."/>
            <person name="Bentley S.D."/>
            <person name="Brooks K."/>
            <person name="Cerdeno-Tarraga A.-M."/>
            <person name="Chillingworth T."/>
            <person name="Cronin A."/>
            <person name="Davies R.M."/>
            <person name="Davis P."/>
            <person name="Dougan G."/>
            <person name="Feltwell T."/>
            <person name="Hamlin N."/>
            <person name="Holroyd S."/>
            <person name="Jagels K."/>
            <person name="Karlyshev A.V."/>
            <person name="Leather S."/>
            <person name="Moule S."/>
            <person name="Oyston P.C.F."/>
            <person name="Quail M.A."/>
            <person name="Rutherford K.M."/>
            <person name="Simmonds M."/>
            <person name="Skelton J."/>
            <person name="Stevens K."/>
            <person name="Whitehead S."/>
            <person name="Barrell B.G."/>
        </authorList>
    </citation>
    <scope>NUCLEOTIDE SEQUENCE [LARGE SCALE GENOMIC DNA]</scope>
    <source>
        <strain>CO-92 / Biovar Orientalis</strain>
    </source>
</reference>
<reference key="2">
    <citation type="journal article" date="2002" name="J. Bacteriol.">
        <title>Genome sequence of Yersinia pestis KIM.</title>
        <authorList>
            <person name="Deng W."/>
            <person name="Burland V."/>
            <person name="Plunkett G. III"/>
            <person name="Boutin A."/>
            <person name="Mayhew G.F."/>
            <person name="Liss P."/>
            <person name="Perna N.T."/>
            <person name="Rose D.J."/>
            <person name="Mau B."/>
            <person name="Zhou S."/>
            <person name="Schwartz D.C."/>
            <person name="Fetherston J.D."/>
            <person name="Lindler L.E."/>
            <person name="Brubaker R.R."/>
            <person name="Plano G.V."/>
            <person name="Straley S.C."/>
            <person name="McDonough K.A."/>
            <person name="Nilles M.L."/>
            <person name="Matson J.S."/>
            <person name="Blattner F.R."/>
            <person name="Perry R.D."/>
        </authorList>
    </citation>
    <scope>NUCLEOTIDE SEQUENCE [LARGE SCALE GENOMIC DNA]</scope>
    <source>
        <strain>KIM10+ / Biovar Mediaevalis</strain>
    </source>
</reference>
<reference key="3">
    <citation type="journal article" date="2004" name="DNA Res.">
        <title>Complete genome sequence of Yersinia pestis strain 91001, an isolate avirulent to humans.</title>
        <authorList>
            <person name="Song Y."/>
            <person name="Tong Z."/>
            <person name="Wang J."/>
            <person name="Wang L."/>
            <person name="Guo Z."/>
            <person name="Han Y."/>
            <person name="Zhang J."/>
            <person name="Pei D."/>
            <person name="Zhou D."/>
            <person name="Qin H."/>
            <person name="Pang X."/>
            <person name="Han Y."/>
            <person name="Zhai J."/>
            <person name="Li M."/>
            <person name="Cui B."/>
            <person name="Qi Z."/>
            <person name="Jin L."/>
            <person name="Dai R."/>
            <person name="Chen F."/>
            <person name="Li S."/>
            <person name="Ye C."/>
            <person name="Du Z."/>
            <person name="Lin W."/>
            <person name="Wang J."/>
            <person name="Yu J."/>
            <person name="Yang H."/>
            <person name="Wang J."/>
            <person name="Huang P."/>
            <person name="Yang R."/>
        </authorList>
    </citation>
    <scope>NUCLEOTIDE SEQUENCE [LARGE SCALE GENOMIC DNA]</scope>
    <source>
        <strain>91001 / Biovar Mediaevalis</strain>
    </source>
</reference>
<feature type="chain" id="PRO_0000179725" description="ATP-dependent Clp protease proteolytic subunit">
    <location>
        <begin position="1"/>
        <end position="207"/>
    </location>
</feature>
<feature type="active site" description="Nucleophile" evidence="1">
    <location>
        <position position="111"/>
    </location>
</feature>
<feature type="active site" evidence="1">
    <location>
        <position position="136"/>
    </location>
</feature>
<comment type="function">
    <text evidence="1">Cleaves peptides in various proteins in a process that requires ATP hydrolysis. Has a chymotrypsin-like activity. Plays a major role in the degradation of misfolded proteins.</text>
</comment>
<comment type="catalytic activity">
    <reaction evidence="1">
        <text>Hydrolysis of proteins to small peptides in the presence of ATP and magnesium. alpha-casein is the usual test substrate. In the absence of ATP, only oligopeptides shorter than five residues are hydrolyzed (such as succinyl-Leu-Tyr-|-NHMec, and Leu-Tyr-Leu-|-Tyr-Trp, in which cleavage of the -Tyr-|-Leu- and -Tyr-|-Trp bonds also occurs).</text>
        <dbReference type="EC" id="3.4.21.92"/>
    </reaction>
</comment>
<comment type="subunit">
    <text evidence="1">Fourteen ClpP subunits assemble into 2 heptameric rings which stack back to back to give a disk-like structure with a central cavity, resembling the structure of eukaryotic proteasomes.</text>
</comment>
<comment type="subcellular location">
    <subcellularLocation>
        <location evidence="1">Cytoplasm</location>
    </subcellularLocation>
</comment>
<comment type="similarity">
    <text evidence="1">Belongs to the peptidase S14 family.</text>
</comment>